<keyword id="KW-0488">Methylation</keyword>
<keyword id="KW-0687">Ribonucleoprotein</keyword>
<keyword id="KW-0689">Ribosomal protein</keyword>
<keyword id="KW-0694">RNA-binding</keyword>
<keyword id="KW-0699">rRNA-binding</keyword>
<keyword id="KW-0820">tRNA-binding</keyword>
<name>RS12_BACMK</name>
<reference key="1">
    <citation type="journal article" date="2008" name="Chem. Biol. Interact.">
        <title>Extending the Bacillus cereus group genomics to putative food-borne pathogens of different toxicity.</title>
        <authorList>
            <person name="Lapidus A."/>
            <person name="Goltsman E."/>
            <person name="Auger S."/>
            <person name="Galleron N."/>
            <person name="Segurens B."/>
            <person name="Dossat C."/>
            <person name="Land M.L."/>
            <person name="Broussolle V."/>
            <person name="Brillard J."/>
            <person name="Guinebretiere M.-H."/>
            <person name="Sanchis V."/>
            <person name="Nguen-the C."/>
            <person name="Lereclus D."/>
            <person name="Richardson P."/>
            <person name="Wincker P."/>
            <person name="Weissenbach J."/>
            <person name="Ehrlich S.D."/>
            <person name="Sorokin A."/>
        </authorList>
    </citation>
    <scope>NUCLEOTIDE SEQUENCE [LARGE SCALE GENOMIC DNA]</scope>
    <source>
        <strain>KBAB4</strain>
    </source>
</reference>
<dbReference type="EMBL" id="CP000903">
    <property type="protein sequence ID" value="ABY41369.1"/>
    <property type="molecule type" value="Genomic_DNA"/>
</dbReference>
<dbReference type="RefSeq" id="WP_001142341.1">
    <property type="nucleotide sequence ID" value="NZ_CAKMRX030000129.1"/>
</dbReference>
<dbReference type="SMR" id="A9VP72"/>
<dbReference type="GeneID" id="92887798"/>
<dbReference type="KEGG" id="bwe:BcerKBAB4_0100"/>
<dbReference type="eggNOG" id="COG0048">
    <property type="taxonomic scope" value="Bacteria"/>
</dbReference>
<dbReference type="HOGENOM" id="CLU_104295_1_2_9"/>
<dbReference type="Proteomes" id="UP000002154">
    <property type="component" value="Chromosome"/>
</dbReference>
<dbReference type="GO" id="GO:0015935">
    <property type="term" value="C:small ribosomal subunit"/>
    <property type="evidence" value="ECO:0007669"/>
    <property type="project" value="InterPro"/>
</dbReference>
<dbReference type="GO" id="GO:0019843">
    <property type="term" value="F:rRNA binding"/>
    <property type="evidence" value="ECO:0007669"/>
    <property type="project" value="UniProtKB-UniRule"/>
</dbReference>
<dbReference type="GO" id="GO:0003735">
    <property type="term" value="F:structural constituent of ribosome"/>
    <property type="evidence" value="ECO:0007669"/>
    <property type="project" value="InterPro"/>
</dbReference>
<dbReference type="GO" id="GO:0000049">
    <property type="term" value="F:tRNA binding"/>
    <property type="evidence" value="ECO:0007669"/>
    <property type="project" value="UniProtKB-UniRule"/>
</dbReference>
<dbReference type="GO" id="GO:0006412">
    <property type="term" value="P:translation"/>
    <property type="evidence" value="ECO:0007669"/>
    <property type="project" value="UniProtKB-UniRule"/>
</dbReference>
<dbReference type="CDD" id="cd03368">
    <property type="entry name" value="Ribosomal_S12"/>
    <property type="match status" value="1"/>
</dbReference>
<dbReference type="FunFam" id="2.40.50.140:FF:000001">
    <property type="entry name" value="30S ribosomal protein S12"/>
    <property type="match status" value="1"/>
</dbReference>
<dbReference type="Gene3D" id="2.40.50.140">
    <property type="entry name" value="Nucleic acid-binding proteins"/>
    <property type="match status" value="1"/>
</dbReference>
<dbReference type="HAMAP" id="MF_00403_B">
    <property type="entry name" value="Ribosomal_uS12_B"/>
    <property type="match status" value="1"/>
</dbReference>
<dbReference type="InterPro" id="IPR012340">
    <property type="entry name" value="NA-bd_OB-fold"/>
</dbReference>
<dbReference type="InterPro" id="IPR006032">
    <property type="entry name" value="Ribosomal_uS12"/>
</dbReference>
<dbReference type="InterPro" id="IPR005679">
    <property type="entry name" value="Ribosomal_uS12_bac"/>
</dbReference>
<dbReference type="NCBIfam" id="TIGR00981">
    <property type="entry name" value="rpsL_bact"/>
    <property type="match status" value="1"/>
</dbReference>
<dbReference type="PANTHER" id="PTHR11652">
    <property type="entry name" value="30S RIBOSOMAL PROTEIN S12 FAMILY MEMBER"/>
    <property type="match status" value="1"/>
</dbReference>
<dbReference type="Pfam" id="PF00164">
    <property type="entry name" value="Ribosom_S12_S23"/>
    <property type="match status" value="1"/>
</dbReference>
<dbReference type="PRINTS" id="PR01034">
    <property type="entry name" value="RIBOSOMALS12"/>
</dbReference>
<dbReference type="SUPFAM" id="SSF50249">
    <property type="entry name" value="Nucleic acid-binding proteins"/>
    <property type="match status" value="1"/>
</dbReference>
<dbReference type="PROSITE" id="PS00055">
    <property type="entry name" value="RIBOSOMAL_S12"/>
    <property type="match status" value="1"/>
</dbReference>
<evidence type="ECO:0000250" key="1"/>
<evidence type="ECO:0000255" key="2">
    <source>
        <dbReference type="HAMAP-Rule" id="MF_00403"/>
    </source>
</evidence>
<evidence type="ECO:0000305" key="3"/>
<proteinExistence type="inferred from homology"/>
<protein>
    <recommendedName>
        <fullName evidence="2">Small ribosomal subunit protein uS12</fullName>
    </recommendedName>
    <alternativeName>
        <fullName evidence="3">30S ribosomal protein S12</fullName>
    </alternativeName>
</protein>
<accession>A9VP72</accession>
<organism>
    <name type="scientific">Bacillus mycoides (strain KBAB4)</name>
    <name type="common">Bacillus weihenstephanensis</name>
    <dbReference type="NCBI Taxonomy" id="315730"/>
    <lineage>
        <taxon>Bacteria</taxon>
        <taxon>Bacillati</taxon>
        <taxon>Bacillota</taxon>
        <taxon>Bacilli</taxon>
        <taxon>Bacillales</taxon>
        <taxon>Bacillaceae</taxon>
        <taxon>Bacillus</taxon>
        <taxon>Bacillus cereus group</taxon>
    </lineage>
</organism>
<comment type="function">
    <text evidence="2">With S4 and S5 plays an important role in translational accuracy.</text>
</comment>
<comment type="function">
    <text evidence="2">Interacts with and stabilizes bases of the 16S rRNA that are involved in tRNA selection in the A site and with the mRNA backbone. Located at the interface of the 30S and 50S subunits, it traverses the body of the 30S subunit contacting proteins on the other side and probably holding the rRNA structure together. The combined cluster of proteins S8, S12 and S17 appears to hold together the shoulder and platform of the 30S subunit.</text>
</comment>
<comment type="subunit">
    <text evidence="2">Part of the 30S ribosomal subunit. Contacts proteins S8 and S17. May interact with IF1 in the 30S initiation complex.</text>
</comment>
<comment type="similarity">
    <text evidence="2">Belongs to the universal ribosomal protein uS12 family.</text>
</comment>
<feature type="chain" id="PRO_1000194127" description="Small ribosomal subunit protein uS12">
    <location>
        <begin position="1"/>
        <end position="140"/>
    </location>
</feature>
<feature type="modified residue" description="3-methylthioaspartic acid" evidence="1">
    <location>
        <position position="102"/>
    </location>
</feature>
<sequence length="140" mass="15500">MPTINQLVRNGRTDKVWKSKSPALNKGFNSLKKKSTDISAPQKRGVCTRVGTMTPKKPNSALRKYARVRLTNGIEVTAYIPGIGHNLQEHSVVLIRGGRVKDLPGVRYHIVRGALDTAGVDKRMQGRSKYGTKRPKPAKK</sequence>
<gene>
    <name evidence="2" type="primary">rpsL</name>
    <name type="ordered locus">BcerKBAB4_0100</name>
</gene>